<gene>
    <name evidence="1" type="primary">der</name>
    <name type="synonym">engA</name>
    <name type="ordered locus">BVU_0450</name>
</gene>
<protein>
    <recommendedName>
        <fullName evidence="1">GTPase Der</fullName>
    </recommendedName>
    <alternativeName>
        <fullName evidence="1">GTP-binding protein EngA</fullName>
    </alternativeName>
</protein>
<sequence length="437" mass="49386">MGNLVAIVGRPNVGKSTLFNRLTKTRQAIVNEQAGTTRDRQYGKSEWVGHEFSVVDTGGWVVNSDDVFEEEIRKQVSLAIDEADVILFVVDVVNGVTDLDMAVASILRRTKKPVIMVANKTDNNELQYNAAEFYKLGLGDPYCISALSGSGTGELLDLVVGKFSKEGEELLDEDIPRFAVVGRPNAGKSSIINAFIGEDRNIVTEIAGTTRDSIYTRYEKFGFDFYLVDTAGIRKKNKVSEDLEYYSVIRSIRSIENSDVCILMLDATRGIEGQDLNIFSLIQRNQKGLVVVVNKWDLVENKNAKVMKTYEEAIRSRLAPFVDFPIIFASALTKQRIFKVLETAKEVYQARTTRIPTARLNEEMLPLIEAYPPPSNKGKYIKIKYCTQLPNTQVPSFVFFANLPQYVKEPYKRFLENKIREKWNLSGTPINIFIRQK</sequence>
<reference key="1">
    <citation type="journal article" date="2007" name="PLoS Biol.">
        <title>Evolution of symbiotic bacteria in the distal human intestine.</title>
        <authorList>
            <person name="Xu J."/>
            <person name="Mahowald M.A."/>
            <person name="Ley R.E."/>
            <person name="Lozupone C.A."/>
            <person name="Hamady M."/>
            <person name="Martens E.C."/>
            <person name="Henrissat B."/>
            <person name="Coutinho P.M."/>
            <person name="Minx P."/>
            <person name="Latreille P."/>
            <person name="Cordum H."/>
            <person name="Van Brunt A."/>
            <person name="Kim K."/>
            <person name="Fulton R.S."/>
            <person name="Fulton L.A."/>
            <person name="Clifton S.W."/>
            <person name="Wilson R.K."/>
            <person name="Knight R.D."/>
            <person name="Gordon J.I."/>
        </authorList>
    </citation>
    <scope>NUCLEOTIDE SEQUENCE [LARGE SCALE GENOMIC DNA]</scope>
    <source>
        <strain>ATCC 8482 / DSM 1447 / JCM 5826 / CCUG 4940 / NBRC 14291 / NCTC 11154</strain>
    </source>
</reference>
<keyword id="KW-0342">GTP-binding</keyword>
<keyword id="KW-0547">Nucleotide-binding</keyword>
<keyword id="KW-0677">Repeat</keyword>
<keyword id="KW-0690">Ribosome biogenesis</keyword>
<organism>
    <name type="scientific">Phocaeicola vulgatus (strain ATCC 8482 / DSM 1447 / JCM 5826 / CCUG 4940 / NBRC 14291 / NCTC 11154)</name>
    <name type="common">Bacteroides vulgatus</name>
    <dbReference type="NCBI Taxonomy" id="435590"/>
    <lineage>
        <taxon>Bacteria</taxon>
        <taxon>Pseudomonadati</taxon>
        <taxon>Bacteroidota</taxon>
        <taxon>Bacteroidia</taxon>
        <taxon>Bacteroidales</taxon>
        <taxon>Bacteroidaceae</taxon>
        <taxon>Phocaeicola</taxon>
    </lineage>
</organism>
<feature type="chain" id="PRO_1000011566" description="GTPase Der">
    <location>
        <begin position="1"/>
        <end position="437"/>
    </location>
</feature>
<feature type="domain" description="EngA-type G 1">
    <location>
        <begin position="3"/>
        <end position="167"/>
    </location>
</feature>
<feature type="domain" description="EngA-type G 2">
    <location>
        <begin position="176"/>
        <end position="352"/>
    </location>
</feature>
<feature type="domain" description="KH-like" evidence="1">
    <location>
        <begin position="353"/>
        <end position="437"/>
    </location>
</feature>
<feature type="binding site" evidence="1">
    <location>
        <begin position="9"/>
        <end position="16"/>
    </location>
    <ligand>
        <name>GTP</name>
        <dbReference type="ChEBI" id="CHEBI:37565"/>
        <label>1</label>
    </ligand>
</feature>
<feature type="binding site" evidence="1">
    <location>
        <begin position="56"/>
        <end position="60"/>
    </location>
    <ligand>
        <name>GTP</name>
        <dbReference type="ChEBI" id="CHEBI:37565"/>
        <label>1</label>
    </ligand>
</feature>
<feature type="binding site" evidence="1">
    <location>
        <begin position="119"/>
        <end position="122"/>
    </location>
    <ligand>
        <name>GTP</name>
        <dbReference type="ChEBI" id="CHEBI:37565"/>
        <label>1</label>
    </ligand>
</feature>
<feature type="binding site" evidence="1">
    <location>
        <begin position="182"/>
        <end position="189"/>
    </location>
    <ligand>
        <name>GTP</name>
        <dbReference type="ChEBI" id="CHEBI:37565"/>
        <label>2</label>
    </ligand>
</feature>
<feature type="binding site" evidence="1">
    <location>
        <begin position="229"/>
        <end position="233"/>
    </location>
    <ligand>
        <name>GTP</name>
        <dbReference type="ChEBI" id="CHEBI:37565"/>
        <label>2</label>
    </ligand>
</feature>
<feature type="binding site" evidence="1">
    <location>
        <begin position="294"/>
        <end position="297"/>
    </location>
    <ligand>
        <name>GTP</name>
        <dbReference type="ChEBI" id="CHEBI:37565"/>
        <label>2</label>
    </ligand>
</feature>
<name>DER_PHOV8</name>
<accession>A6KXK1</accession>
<evidence type="ECO:0000255" key="1">
    <source>
        <dbReference type="HAMAP-Rule" id="MF_00195"/>
    </source>
</evidence>
<proteinExistence type="inferred from homology"/>
<comment type="function">
    <text evidence="1">GTPase that plays an essential role in the late steps of ribosome biogenesis.</text>
</comment>
<comment type="subunit">
    <text evidence="1">Associates with the 50S ribosomal subunit.</text>
</comment>
<comment type="similarity">
    <text evidence="1">Belongs to the TRAFAC class TrmE-Era-EngA-EngB-Septin-like GTPase superfamily. EngA (Der) GTPase family.</text>
</comment>
<dbReference type="EMBL" id="CP000139">
    <property type="protein sequence ID" value="ABR38165.1"/>
    <property type="molecule type" value="Genomic_DNA"/>
</dbReference>
<dbReference type="RefSeq" id="WP_005840228.1">
    <property type="nucleotide sequence ID" value="NZ_JANSWM010000030.1"/>
</dbReference>
<dbReference type="SMR" id="A6KXK1"/>
<dbReference type="STRING" id="435590.BVU_0450"/>
<dbReference type="PaxDb" id="435590-BVU_0450"/>
<dbReference type="GeneID" id="5301419"/>
<dbReference type="KEGG" id="bvu:BVU_0450"/>
<dbReference type="eggNOG" id="COG1160">
    <property type="taxonomic scope" value="Bacteria"/>
</dbReference>
<dbReference type="HOGENOM" id="CLU_016077_6_2_10"/>
<dbReference type="BioCyc" id="BVUL435590:G1G59-473-MONOMER"/>
<dbReference type="Proteomes" id="UP000002861">
    <property type="component" value="Chromosome"/>
</dbReference>
<dbReference type="GO" id="GO:0005525">
    <property type="term" value="F:GTP binding"/>
    <property type="evidence" value="ECO:0007669"/>
    <property type="project" value="UniProtKB-UniRule"/>
</dbReference>
<dbReference type="GO" id="GO:0043022">
    <property type="term" value="F:ribosome binding"/>
    <property type="evidence" value="ECO:0007669"/>
    <property type="project" value="TreeGrafter"/>
</dbReference>
<dbReference type="GO" id="GO:0042254">
    <property type="term" value="P:ribosome biogenesis"/>
    <property type="evidence" value="ECO:0007669"/>
    <property type="project" value="UniProtKB-KW"/>
</dbReference>
<dbReference type="CDD" id="cd01894">
    <property type="entry name" value="EngA1"/>
    <property type="match status" value="1"/>
</dbReference>
<dbReference type="CDD" id="cd01895">
    <property type="entry name" value="EngA2"/>
    <property type="match status" value="1"/>
</dbReference>
<dbReference type="FunFam" id="3.30.300.20:FF:000004">
    <property type="entry name" value="GTPase Der"/>
    <property type="match status" value="1"/>
</dbReference>
<dbReference type="FunFam" id="3.40.50.300:FF:000040">
    <property type="entry name" value="GTPase Der"/>
    <property type="match status" value="1"/>
</dbReference>
<dbReference type="FunFam" id="3.40.50.300:FF:000953">
    <property type="entry name" value="GTPase Der"/>
    <property type="match status" value="1"/>
</dbReference>
<dbReference type="Gene3D" id="3.30.300.20">
    <property type="match status" value="1"/>
</dbReference>
<dbReference type="Gene3D" id="3.40.50.300">
    <property type="entry name" value="P-loop containing nucleotide triphosphate hydrolases"/>
    <property type="match status" value="2"/>
</dbReference>
<dbReference type="HAMAP" id="MF_00195">
    <property type="entry name" value="GTPase_Der"/>
    <property type="match status" value="1"/>
</dbReference>
<dbReference type="InterPro" id="IPR031166">
    <property type="entry name" value="G_ENGA"/>
</dbReference>
<dbReference type="InterPro" id="IPR006073">
    <property type="entry name" value="GTP-bd"/>
</dbReference>
<dbReference type="InterPro" id="IPR016484">
    <property type="entry name" value="GTPase_Der"/>
</dbReference>
<dbReference type="InterPro" id="IPR032859">
    <property type="entry name" value="KH_dom-like"/>
</dbReference>
<dbReference type="InterPro" id="IPR015946">
    <property type="entry name" value="KH_dom-like_a/b"/>
</dbReference>
<dbReference type="InterPro" id="IPR027417">
    <property type="entry name" value="P-loop_NTPase"/>
</dbReference>
<dbReference type="InterPro" id="IPR005225">
    <property type="entry name" value="Small_GTP-bd"/>
</dbReference>
<dbReference type="NCBIfam" id="TIGR03594">
    <property type="entry name" value="GTPase_EngA"/>
    <property type="match status" value="1"/>
</dbReference>
<dbReference type="NCBIfam" id="TIGR00231">
    <property type="entry name" value="small_GTP"/>
    <property type="match status" value="2"/>
</dbReference>
<dbReference type="PANTHER" id="PTHR43834">
    <property type="entry name" value="GTPASE DER"/>
    <property type="match status" value="1"/>
</dbReference>
<dbReference type="PANTHER" id="PTHR43834:SF6">
    <property type="entry name" value="GTPASE DER"/>
    <property type="match status" value="1"/>
</dbReference>
<dbReference type="Pfam" id="PF14714">
    <property type="entry name" value="KH_dom-like"/>
    <property type="match status" value="1"/>
</dbReference>
<dbReference type="Pfam" id="PF01926">
    <property type="entry name" value="MMR_HSR1"/>
    <property type="match status" value="2"/>
</dbReference>
<dbReference type="PIRSF" id="PIRSF006485">
    <property type="entry name" value="GTP-binding_EngA"/>
    <property type="match status" value="1"/>
</dbReference>
<dbReference type="PRINTS" id="PR00326">
    <property type="entry name" value="GTP1OBG"/>
</dbReference>
<dbReference type="SUPFAM" id="SSF52540">
    <property type="entry name" value="P-loop containing nucleoside triphosphate hydrolases"/>
    <property type="match status" value="2"/>
</dbReference>
<dbReference type="PROSITE" id="PS51712">
    <property type="entry name" value="G_ENGA"/>
    <property type="match status" value="2"/>
</dbReference>